<comment type="function">
    <text evidence="1">This protein is one of the two subunits of integration host factor, a specific DNA-binding protein that functions in genetic recombination as well as in transcriptional and translational control.</text>
</comment>
<comment type="subunit">
    <text evidence="1">Heterodimer of an alpha and a beta chain.</text>
</comment>
<comment type="similarity">
    <text evidence="1">Belongs to the bacterial histone-like protein family.</text>
</comment>
<evidence type="ECO:0000255" key="1">
    <source>
        <dbReference type="HAMAP-Rule" id="MF_00380"/>
    </source>
</evidence>
<evidence type="ECO:0000256" key="2">
    <source>
        <dbReference type="SAM" id="MobiDB-lite"/>
    </source>
</evidence>
<dbReference type="EMBL" id="CP001164">
    <property type="protein sequence ID" value="ACI37928.1"/>
    <property type="molecule type" value="Genomic_DNA"/>
</dbReference>
<dbReference type="RefSeq" id="WP_001229265.1">
    <property type="nucleotide sequence ID" value="NC_011353.1"/>
</dbReference>
<dbReference type="SMR" id="B5YQ00"/>
<dbReference type="GeneID" id="93775925"/>
<dbReference type="KEGG" id="ecf:ECH74115_2430"/>
<dbReference type="HOGENOM" id="CLU_105066_1_3_6"/>
<dbReference type="GO" id="GO:0005829">
    <property type="term" value="C:cytosol"/>
    <property type="evidence" value="ECO:0007669"/>
    <property type="project" value="TreeGrafter"/>
</dbReference>
<dbReference type="GO" id="GO:0003677">
    <property type="term" value="F:DNA binding"/>
    <property type="evidence" value="ECO:0007669"/>
    <property type="project" value="UniProtKB-UniRule"/>
</dbReference>
<dbReference type="GO" id="GO:0030527">
    <property type="term" value="F:structural constituent of chromatin"/>
    <property type="evidence" value="ECO:0007669"/>
    <property type="project" value="InterPro"/>
</dbReference>
<dbReference type="GO" id="GO:0006310">
    <property type="term" value="P:DNA recombination"/>
    <property type="evidence" value="ECO:0007669"/>
    <property type="project" value="UniProtKB-UniRule"/>
</dbReference>
<dbReference type="GO" id="GO:0009893">
    <property type="term" value="P:positive regulation of metabolic process"/>
    <property type="evidence" value="ECO:0007669"/>
    <property type="project" value="UniProtKB-ARBA"/>
</dbReference>
<dbReference type="GO" id="GO:0006355">
    <property type="term" value="P:regulation of DNA-templated transcription"/>
    <property type="evidence" value="ECO:0007669"/>
    <property type="project" value="UniProtKB-UniRule"/>
</dbReference>
<dbReference type="GO" id="GO:0006417">
    <property type="term" value="P:regulation of translation"/>
    <property type="evidence" value="ECO:0007669"/>
    <property type="project" value="UniProtKB-UniRule"/>
</dbReference>
<dbReference type="CDD" id="cd13835">
    <property type="entry name" value="IHF_A"/>
    <property type="match status" value="1"/>
</dbReference>
<dbReference type="FunFam" id="4.10.520.10:FF:000002">
    <property type="entry name" value="Integration host factor subunit alpha"/>
    <property type="match status" value="1"/>
</dbReference>
<dbReference type="Gene3D" id="4.10.520.10">
    <property type="entry name" value="IHF-like DNA-binding proteins"/>
    <property type="match status" value="1"/>
</dbReference>
<dbReference type="HAMAP" id="MF_00380">
    <property type="entry name" value="IHF_alpha"/>
    <property type="match status" value="1"/>
</dbReference>
<dbReference type="InterPro" id="IPR000119">
    <property type="entry name" value="Hist_DNA-bd"/>
</dbReference>
<dbReference type="InterPro" id="IPR020816">
    <property type="entry name" value="Histone-like_DNA-bd_CS"/>
</dbReference>
<dbReference type="InterPro" id="IPR010992">
    <property type="entry name" value="IHF-like_DNA-bd_dom_sf"/>
</dbReference>
<dbReference type="InterPro" id="IPR005684">
    <property type="entry name" value="IHF_alpha"/>
</dbReference>
<dbReference type="NCBIfam" id="TIGR00987">
    <property type="entry name" value="himA"/>
    <property type="match status" value="1"/>
</dbReference>
<dbReference type="NCBIfam" id="NF001401">
    <property type="entry name" value="PRK00285.1"/>
    <property type="match status" value="1"/>
</dbReference>
<dbReference type="PANTHER" id="PTHR33175">
    <property type="entry name" value="DNA-BINDING PROTEIN HU"/>
    <property type="match status" value="1"/>
</dbReference>
<dbReference type="PANTHER" id="PTHR33175:SF2">
    <property type="entry name" value="INTEGRATION HOST FACTOR SUBUNIT ALPHA"/>
    <property type="match status" value="1"/>
</dbReference>
<dbReference type="Pfam" id="PF00216">
    <property type="entry name" value="Bac_DNA_binding"/>
    <property type="match status" value="1"/>
</dbReference>
<dbReference type="PRINTS" id="PR01727">
    <property type="entry name" value="DNABINDINGHU"/>
</dbReference>
<dbReference type="SMART" id="SM00411">
    <property type="entry name" value="BHL"/>
    <property type="match status" value="1"/>
</dbReference>
<dbReference type="SUPFAM" id="SSF47729">
    <property type="entry name" value="IHF-like DNA-binding proteins"/>
    <property type="match status" value="1"/>
</dbReference>
<dbReference type="PROSITE" id="PS00045">
    <property type="entry name" value="HISTONE_LIKE"/>
    <property type="match status" value="1"/>
</dbReference>
<proteinExistence type="inferred from homology"/>
<feature type="chain" id="PRO_1000122135" description="Integration host factor subunit alpha">
    <location>
        <begin position="1"/>
        <end position="99"/>
    </location>
</feature>
<feature type="region of interest" description="Disordered" evidence="2">
    <location>
        <begin position="49"/>
        <end position="73"/>
    </location>
</feature>
<keyword id="KW-0233">DNA recombination</keyword>
<keyword id="KW-0238">DNA-binding</keyword>
<keyword id="KW-0804">Transcription</keyword>
<keyword id="KW-0805">Transcription regulation</keyword>
<keyword id="KW-0810">Translation regulation</keyword>
<sequence length="99" mass="11354">MALTKAEMSEYLFDKLGLSKRDAKELVELFFEEIRRALENGEQVKLSGFGNFDLRDKNQRPGRNPKTGEDIPITARRVVTFRPGQKLKSRVENASPKDE</sequence>
<organism>
    <name type="scientific">Escherichia coli O157:H7 (strain EC4115 / EHEC)</name>
    <dbReference type="NCBI Taxonomy" id="444450"/>
    <lineage>
        <taxon>Bacteria</taxon>
        <taxon>Pseudomonadati</taxon>
        <taxon>Pseudomonadota</taxon>
        <taxon>Gammaproteobacteria</taxon>
        <taxon>Enterobacterales</taxon>
        <taxon>Enterobacteriaceae</taxon>
        <taxon>Escherichia</taxon>
    </lineage>
</organism>
<protein>
    <recommendedName>
        <fullName evidence="1">Integration host factor subunit alpha</fullName>
        <shortName evidence="1">IHF-alpha</shortName>
    </recommendedName>
</protein>
<accession>B5YQ00</accession>
<gene>
    <name evidence="1" type="primary">ihfA</name>
    <name evidence="1" type="synonym">himA</name>
    <name type="ordered locus">ECH74115_2430</name>
</gene>
<reference key="1">
    <citation type="journal article" date="2011" name="Proc. Natl. Acad. Sci. U.S.A.">
        <title>Genomic anatomy of Escherichia coli O157:H7 outbreaks.</title>
        <authorList>
            <person name="Eppinger M."/>
            <person name="Mammel M.K."/>
            <person name="Leclerc J.E."/>
            <person name="Ravel J."/>
            <person name="Cebula T.A."/>
        </authorList>
    </citation>
    <scope>NUCLEOTIDE SEQUENCE [LARGE SCALE GENOMIC DNA]</scope>
    <source>
        <strain>EC4115 / EHEC</strain>
    </source>
</reference>
<name>IHFA_ECO5E</name>